<protein>
    <recommendedName>
        <fullName evidence="6">Protein POLLENLESS 3-LIKE 1</fullName>
    </recommendedName>
</protein>
<reference key="1">
    <citation type="journal article" date="1998" name="DNA Res.">
        <title>Structural analysis of Arabidopsis thaliana chromosome 5. V. Sequence features of the regions of 1,381,565 bp covered by twenty one physically assigned P1 and TAC clones.</title>
        <authorList>
            <person name="Kaneko T."/>
            <person name="Kotani H."/>
            <person name="Nakamura Y."/>
            <person name="Sato S."/>
            <person name="Asamizu E."/>
            <person name="Miyajima N."/>
            <person name="Tabata S."/>
        </authorList>
    </citation>
    <scope>NUCLEOTIDE SEQUENCE [LARGE SCALE GENOMIC DNA]</scope>
    <source>
        <strain>cv. Columbia</strain>
    </source>
</reference>
<reference key="2">
    <citation type="journal article" date="2017" name="Plant J.">
        <title>Araport11: a complete reannotation of the Arabidopsis thaliana reference genome.</title>
        <authorList>
            <person name="Cheng C.Y."/>
            <person name="Krishnakumar V."/>
            <person name="Chan A.P."/>
            <person name="Thibaud-Nissen F."/>
            <person name="Schobel S."/>
            <person name="Town C.D."/>
        </authorList>
    </citation>
    <scope>GENOME REANNOTATION</scope>
    <source>
        <strain>cv. Columbia</strain>
    </source>
</reference>
<reference key="3">
    <citation type="journal article" date="2006" name="Plant Biotechnol. J.">
        <title>Simultaneous high-throughput recombinational cloning of open reading frames in closed and open configurations.</title>
        <authorList>
            <person name="Underwood B.A."/>
            <person name="Vanderhaeghen R."/>
            <person name="Whitford R."/>
            <person name="Town C.D."/>
            <person name="Hilson P."/>
        </authorList>
    </citation>
    <scope>NUCLEOTIDE SEQUENCE [LARGE SCALE MRNA]</scope>
    <source>
        <strain>cv. Columbia</strain>
    </source>
</reference>
<reference key="4">
    <citation type="journal article" date="1999" name="Sex. Plant Reprod.">
        <title>Anther developmental defects in Arabidopsis thaliana male-sterile mutants.</title>
        <authorList>
            <person name="Sanders P.M."/>
            <person name="Bui A.Q."/>
            <person name="Weterings K."/>
            <person name="McIntire K.N."/>
            <person name="Hsu Y.-C."/>
            <person name="Lee P.Y."/>
            <person name="Truong M.T."/>
            <person name="Beals T.B."/>
            <person name="Goldberg R.B."/>
        </authorList>
    </citation>
    <scope>TISSUE SPECIFICITY</scope>
    <scope>GENE FAMILY</scope>
    <scope>NOMENCLATURE</scope>
</reference>
<proteinExistence type="evidence at transcript level"/>
<gene>
    <name evidence="8" type="ordered locus">At5g44330</name>
    <name evidence="9" type="ORF">K9L2.11</name>
</gene>
<dbReference type="EMBL" id="AB011475">
    <property type="protein sequence ID" value="BAB10118.1"/>
    <property type="molecule type" value="Genomic_DNA"/>
</dbReference>
<dbReference type="EMBL" id="CP002688">
    <property type="protein sequence ID" value="AED95097.1"/>
    <property type="molecule type" value="Genomic_DNA"/>
</dbReference>
<dbReference type="EMBL" id="DQ056706">
    <property type="protein sequence ID" value="AAY78852.1"/>
    <property type="molecule type" value="mRNA"/>
</dbReference>
<dbReference type="RefSeq" id="NP_199246.1">
    <property type="nucleotide sequence ID" value="NM_123800.1"/>
</dbReference>
<dbReference type="SMR" id="Q9FKV5"/>
<dbReference type="STRING" id="3702.Q9FKV5"/>
<dbReference type="PaxDb" id="3702-AT5G44330.1"/>
<dbReference type="EnsemblPlants" id="AT5G44330.1">
    <property type="protein sequence ID" value="AT5G44330.1"/>
    <property type="gene ID" value="AT5G44330"/>
</dbReference>
<dbReference type="GeneID" id="834458"/>
<dbReference type="Gramene" id="AT5G44330.1">
    <property type="protein sequence ID" value="AT5G44330.1"/>
    <property type="gene ID" value="AT5G44330"/>
</dbReference>
<dbReference type="KEGG" id="ath:AT5G44330"/>
<dbReference type="Araport" id="AT5G44330"/>
<dbReference type="TAIR" id="AT5G44330"/>
<dbReference type="eggNOG" id="ENOG502QQBN">
    <property type="taxonomic scope" value="Eukaryota"/>
</dbReference>
<dbReference type="HOGENOM" id="CLU_013792_0_0_1"/>
<dbReference type="InParanoid" id="Q9FKV5"/>
<dbReference type="OMA" id="QPRECKW"/>
<dbReference type="PhylomeDB" id="Q9FKV5"/>
<dbReference type="PRO" id="PR:Q9FKV5"/>
<dbReference type="Proteomes" id="UP000006548">
    <property type="component" value="Chromosome 5"/>
</dbReference>
<dbReference type="ExpressionAtlas" id="Q9FKV5">
    <property type="expression patterns" value="baseline and differential"/>
</dbReference>
<dbReference type="GO" id="GO:0005634">
    <property type="term" value="C:nucleus"/>
    <property type="evidence" value="ECO:0007669"/>
    <property type="project" value="UniProtKB-SubCell"/>
</dbReference>
<dbReference type="GO" id="GO:0051301">
    <property type="term" value="P:cell division"/>
    <property type="evidence" value="ECO:0007669"/>
    <property type="project" value="UniProtKB-KW"/>
</dbReference>
<dbReference type="Gene3D" id="1.25.40.10">
    <property type="entry name" value="Tetratricopeptide repeat domain"/>
    <property type="match status" value="1"/>
</dbReference>
<dbReference type="InterPro" id="IPR044961">
    <property type="entry name" value="MS5/SDI1"/>
</dbReference>
<dbReference type="InterPro" id="IPR011990">
    <property type="entry name" value="TPR-like_helical_dom_sf"/>
</dbReference>
<dbReference type="InterPro" id="IPR013105">
    <property type="entry name" value="TPR_2"/>
</dbReference>
<dbReference type="InterPro" id="IPR019734">
    <property type="entry name" value="TPR_rpt"/>
</dbReference>
<dbReference type="PANTHER" id="PTHR36326:SF4">
    <property type="entry name" value="PROTEIN POLLENLESS 3-LIKE 1"/>
    <property type="match status" value="1"/>
</dbReference>
<dbReference type="PANTHER" id="PTHR36326">
    <property type="entry name" value="PROTEIN POLLENLESS 3-LIKE 2"/>
    <property type="match status" value="1"/>
</dbReference>
<dbReference type="Pfam" id="PF07719">
    <property type="entry name" value="TPR_2"/>
    <property type="match status" value="1"/>
</dbReference>
<dbReference type="SMART" id="SM00028">
    <property type="entry name" value="TPR"/>
    <property type="match status" value="1"/>
</dbReference>
<dbReference type="SUPFAM" id="SSF48452">
    <property type="entry name" value="TPR-like"/>
    <property type="match status" value="1"/>
</dbReference>
<dbReference type="PROSITE" id="PS50005">
    <property type="entry name" value="TPR"/>
    <property type="match status" value="1"/>
</dbReference>
<dbReference type="PROSITE" id="PS50293">
    <property type="entry name" value="TPR_REGION"/>
    <property type="match status" value="1"/>
</dbReference>
<comment type="function">
    <text evidence="1">Probably involved in the regulation of cell division.</text>
</comment>
<comment type="subcellular location">
    <subcellularLocation>
        <location evidence="1">Nucleus</location>
    </subcellularLocation>
</comment>
<comment type="tissue specificity">
    <text evidence="5">Expressed in floral and vegetative organs. Also barely detectable in leaves and stems.</text>
</comment>
<comment type="similarity">
    <text evidence="7">Belongs to the MS5 protein family.</text>
</comment>
<organism>
    <name type="scientific">Arabidopsis thaliana</name>
    <name type="common">Mouse-ear cress</name>
    <dbReference type="NCBI Taxonomy" id="3702"/>
    <lineage>
        <taxon>Eukaryota</taxon>
        <taxon>Viridiplantae</taxon>
        <taxon>Streptophyta</taxon>
        <taxon>Embryophyta</taxon>
        <taxon>Tracheophyta</taxon>
        <taxon>Spermatophyta</taxon>
        <taxon>Magnoliopsida</taxon>
        <taxon>eudicotyledons</taxon>
        <taxon>Gunneridae</taxon>
        <taxon>Pentapetalae</taxon>
        <taxon>rosids</taxon>
        <taxon>malvids</taxon>
        <taxon>Brassicales</taxon>
        <taxon>Brassicaceae</taxon>
        <taxon>Camelineae</taxon>
        <taxon>Arabidopsis</taxon>
    </lineage>
</organism>
<feature type="chain" id="PRO_0000430654" description="Protein POLLENLESS 3-LIKE 1">
    <location>
        <begin position="1"/>
        <end position="469"/>
    </location>
</feature>
<feature type="repeat" description="TPR 1" evidence="3">
    <location>
        <begin position="88"/>
        <end position="121"/>
    </location>
</feature>
<feature type="repeat" description="TPR 2" evidence="3">
    <location>
        <begin position="124"/>
        <end position="157"/>
    </location>
</feature>
<feature type="repeat" description="TPR 3" evidence="3">
    <location>
        <begin position="184"/>
        <end position="217"/>
    </location>
</feature>
<feature type="region of interest" description="Disordered" evidence="4">
    <location>
        <begin position="1"/>
        <end position="20"/>
    </location>
</feature>
<feature type="region of interest" description="Disordered" evidence="4">
    <location>
        <begin position="314"/>
        <end position="339"/>
    </location>
</feature>
<feature type="coiled-coil region" evidence="2">
    <location>
        <begin position="139"/>
        <end position="191"/>
    </location>
</feature>
<feature type="compositionally biased region" description="Polar residues" evidence="4">
    <location>
        <begin position="314"/>
        <end position="338"/>
    </location>
</feature>
<keyword id="KW-0131">Cell cycle</keyword>
<keyword id="KW-0132">Cell division</keyword>
<keyword id="KW-0175">Coiled coil</keyword>
<keyword id="KW-0539">Nucleus</keyword>
<keyword id="KW-1185">Reference proteome</keyword>
<keyword id="KW-0677">Repeat</keyword>
<keyword id="KW-0802">TPR repeat</keyword>
<accession>Q9FKV5</accession>
<name>MS5L1_ARATH</name>
<sequence length="469" mass="53281">MRRRESRGAKGGGFLTPPPSWHTTRRVYIAMPISERKRSPLIENQESFRVRTGDSPYVRAKHAQLVSKDPNRAISLFWAAINAGDRVDSALKDMVVVLKQLNRFDEGIEAIKSFRYLCPFESQDSIDNLLLELYMKSGRITEVAELLEHKLRTLEQDKHYGGRIKIAKRSHEEQNNKTIEQEKARILGNLAWVHLQLHNYGIAEQYYRNALSLEPDNNKLCNLAICLIRMERTHEAKSLLEDVKQSLGNQWKNEPFCKSFERATEMLAEREQATVADKPEDLLTSSFSDNFSSRCSGGMKGKKALAGTSTELGNIHKTNSHASSESVEQNSPGLTTQPRECKWVDEEVDQSKWDATIGASRKLRFWTVGPVRSLRFGNDYQKNLKSVGTAASTTNDELHQFISSDADCMTSKARKLCPELIKDKEDNEKESERIASESSSAYAKITDIGQRKVLHIDQRKVRHIGQRSV</sequence>
<evidence type="ECO:0000250" key="1">
    <source>
        <dbReference type="UniProtKB" id="Q9SUC3"/>
    </source>
</evidence>
<evidence type="ECO:0000255" key="2"/>
<evidence type="ECO:0000255" key="3">
    <source>
        <dbReference type="PROSITE-ProRule" id="PRU00339"/>
    </source>
</evidence>
<evidence type="ECO:0000256" key="4">
    <source>
        <dbReference type="SAM" id="MobiDB-lite"/>
    </source>
</evidence>
<evidence type="ECO:0000269" key="5">
    <source ref="4"/>
</evidence>
<evidence type="ECO:0000303" key="6">
    <source ref="4"/>
</evidence>
<evidence type="ECO:0000305" key="7">
    <source ref="4"/>
</evidence>
<evidence type="ECO:0000312" key="8">
    <source>
        <dbReference type="Araport" id="AT5G44330"/>
    </source>
</evidence>
<evidence type="ECO:0000312" key="9">
    <source>
        <dbReference type="EMBL" id="BAB10118.1"/>
    </source>
</evidence>